<organism>
    <name type="scientific">Pongo abelii</name>
    <name type="common">Sumatran orangutan</name>
    <name type="synonym">Pongo pygmaeus abelii</name>
    <dbReference type="NCBI Taxonomy" id="9601"/>
    <lineage>
        <taxon>Eukaryota</taxon>
        <taxon>Metazoa</taxon>
        <taxon>Chordata</taxon>
        <taxon>Craniata</taxon>
        <taxon>Vertebrata</taxon>
        <taxon>Euteleostomi</taxon>
        <taxon>Mammalia</taxon>
        <taxon>Eutheria</taxon>
        <taxon>Euarchontoglires</taxon>
        <taxon>Primates</taxon>
        <taxon>Haplorrhini</taxon>
        <taxon>Catarrhini</taxon>
        <taxon>Hominidae</taxon>
        <taxon>Pongo</taxon>
    </lineage>
</organism>
<name>CEP70_PONAB</name>
<reference key="1">
    <citation type="submission" date="2004-11" db="EMBL/GenBank/DDBJ databases">
        <authorList>
            <consortium name="The German cDNA consortium"/>
        </authorList>
    </citation>
    <scope>NUCLEOTIDE SEQUENCE [LARGE SCALE MRNA]</scope>
    <source>
        <tissue>Heart</tissue>
    </source>
</reference>
<feature type="chain" id="PRO_0000414856" description="Centrosomal protein of 70 kDa">
    <location>
        <begin position="1"/>
        <end position="597"/>
    </location>
</feature>
<feature type="repeat" description="TPR">
    <location>
        <begin position="483"/>
        <end position="516"/>
    </location>
</feature>
<feature type="region of interest" description="Disordered" evidence="3">
    <location>
        <begin position="1"/>
        <end position="23"/>
    </location>
</feature>
<feature type="coiled-coil region" evidence="2">
    <location>
        <begin position="66"/>
        <end position="179"/>
    </location>
</feature>
<feature type="coiled-coil region" evidence="2">
    <location>
        <begin position="254"/>
        <end position="326"/>
    </location>
</feature>
<protein>
    <recommendedName>
        <fullName>Centrosomal protein of 70 kDa</fullName>
        <shortName>Cep70</shortName>
    </recommendedName>
</protein>
<comment type="function">
    <text evidence="1">Plays a role in the organization of both preexisting and nascent microtubules in interphase cells. During mitosis, required for the organization and orientation of the mitotic spindle (By similarity).</text>
</comment>
<comment type="subunit">
    <text evidence="1">Directly interacts with tubulin-gamma; this interaction determines centrosomal localization.</text>
</comment>
<comment type="subcellular location">
    <subcellularLocation>
        <location evidence="1">Cytoplasm</location>
        <location evidence="1">Cytoskeleton</location>
        <location evidence="1">Microtubule organizing center</location>
        <location evidence="1">Centrosome</location>
    </subcellularLocation>
</comment>
<comment type="domain">
    <text evidence="1">The coiled-coil domains may be important for tubulin-gamma-binding and hence for centrosomal localization.</text>
</comment>
<dbReference type="EMBL" id="CR857969">
    <property type="protein sequence ID" value="CAH90214.1"/>
    <property type="molecule type" value="mRNA"/>
</dbReference>
<dbReference type="RefSeq" id="NP_001125083.1">
    <property type="nucleotide sequence ID" value="NM_001131611.1"/>
</dbReference>
<dbReference type="RefSeq" id="XP_024099760.2">
    <property type="nucleotide sequence ID" value="XM_024243992.3"/>
</dbReference>
<dbReference type="SMR" id="Q5RDE3"/>
<dbReference type="FunCoup" id="Q5RDE3">
    <property type="interactions" value="415"/>
</dbReference>
<dbReference type="STRING" id="9601.ENSPPYP00000015824"/>
<dbReference type="GeneID" id="100171965"/>
<dbReference type="KEGG" id="pon:100171965"/>
<dbReference type="CTD" id="80321"/>
<dbReference type="eggNOG" id="ENOG502QS45">
    <property type="taxonomic scope" value="Eukaryota"/>
</dbReference>
<dbReference type="InParanoid" id="Q5RDE3"/>
<dbReference type="OrthoDB" id="2020926at2759"/>
<dbReference type="Proteomes" id="UP000001595">
    <property type="component" value="Unplaced"/>
</dbReference>
<dbReference type="GO" id="GO:0005813">
    <property type="term" value="C:centrosome"/>
    <property type="evidence" value="ECO:0007669"/>
    <property type="project" value="UniProtKB-SubCell"/>
</dbReference>
<dbReference type="GO" id="GO:0005737">
    <property type="term" value="C:cytoplasm"/>
    <property type="evidence" value="ECO:0007669"/>
    <property type="project" value="UniProtKB-KW"/>
</dbReference>
<dbReference type="GO" id="GO:0043015">
    <property type="term" value="F:gamma-tubulin binding"/>
    <property type="evidence" value="ECO:0007669"/>
    <property type="project" value="InterPro"/>
</dbReference>
<dbReference type="GO" id="GO:0060271">
    <property type="term" value="P:cilium assembly"/>
    <property type="evidence" value="ECO:0007669"/>
    <property type="project" value="InterPro"/>
</dbReference>
<dbReference type="GO" id="GO:0070507">
    <property type="term" value="P:regulation of microtubule cytoskeleton organization"/>
    <property type="evidence" value="ECO:0007669"/>
    <property type="project" value="InterPro"/>
</dbReference>
<dbReference type="InterPro" id="IPR037692">
    <property type="entry name" value="CEP70"/>
</dbReference>
<dbReference type="InterPro" id="IPR019734">
    <property type="entry name" value="TPR_rpt"/>
</dbReference>
<dbReference type="PANTHER" id="PTHR14594">
    <property type="entry name" value="CENTROSOMAL PROTEIN OF 70 KDA"/>
    <property type="match status" value="1"/>
</dbReference>
<dbReference type="PANTHER" id="PTHR14594:SF1">
    <property type="entry name" value="CENTROSOMAL PROTEIN OF 70 KDA"/>
    <property type="match status" value="1"/>
</dbReference>
<dbReference type="PROSITE" id="PS50005">
    <property type="entry name" value="TPR"/>
    <property type="match status" value="1"/>
</dbReference>
<dbReference type="PROSITE" id="PS50293">
    <property type="entry name" value="TPR_REGION"/>
    <property type="match status" value="1"/>
</dbReference>
<evidence type="ECO:0000250" key="1"/>
<evidence type="ECO:0000255" key="2"/>
<evidence type="ECO:0000256" key="3">
    <source>
        <dbReference type="SAM" id="MobiDB-lite"/>
    </source>
</evidence>
<proteinExistence type="evidence at transcript level"/>
<keyword id="KW-0175">Coiled coil</keyword>
<keyword id="KW-0963">Cytoplasm</keyword>
<keyword id="KW-0206">Cytoskeleton</keyword>
<keyword id="KW-1185">Reference proteome</keyword>
<keyword id="KW-0802">TPR repeat</keyword>
<gene>
    <name type="primary">CEP70</name>
</gene>
<sequence length="597" mass="69796">MFPVAPKPQDSSQASDRLMTEKQQEEAEWESINVLLMMHGLKPLSLVKRTDLKDLIIFDKQSSQRMRQNLKLLVEETSRQQNMIQELIETNQQLRNELQLEQSRAANQEQRANDLEQIMESVKSKIGELEDESLNRACQQQNKIKDLQKEQKTLQVKCQHYKKKRTEQQETIASLQMEVCRLRKEEEDRIVTQNRVFAYLCKRVPHTVLDRQLLCLIDYYESKIRKIHTQRQYKEDESQSEEENDYRNLDASPTYKGLLMSLQNQLKESKSKIDALLSEKLNLQKDLETRPTQHELRLYKQQVKKLEKALKKNIKLQELISHKKAEDTEKKDEPSKYNQQQALIDQRYFQVLCSINSIIHNPRAPVIIYKQSKGGAQNFNKDLVQDCGFEHLVPVIEMWADQLTSLKDLYKSLKTLSAELVPWHNLKKQDENEGIKVEDLLFIVDTMLEEVENKEKDSNMPNFQTLQAIVSHFQKLFDVPSLNGVYPRMNEVYTRLGEMNNAVRNLQELLELDSSSSLCVLVSTVGKLCRLINEDVNEQVMQVLGPEDLQSIIYKLEEHEEFFPAFQAFTNDLLEILEIDDLDAIVPAVKKLKVLSY</sequence>
<accession>Q5RDE3</accession>